<sequence>MAVPAAPNLQLNTARQSSPVNSTENDIHIDERELENITNHVEDGTSLPLHSPWTFWLDRSLPGTTAAECESNLKKIYTVHTVQSFWSVYNNIPPVSCLPLRCSYHLMRGERRPLWEEESNAKGGVWKMKVPKESTLAVWKELLLATIGEQFTDYCASEDEVVGVSVSVREREDVVQVWNGNASFANEANVLGRIYELLPQISFKAVFYKPHEEHHAFEGGRSRH</sequence>
<dbReference type="EMBL" id="BC081620">
    <property type="protein sequence ID" value="AAH81620.1"/>
    <property type="molecule type" value="mRNA"/>
</dbReference>
<dbReference type="EMBL" id="BC096972">
    <property type="protein sequence ID" value="AAH96972.1"/>
    <property type="molecule type" value="mRNA"/>
</dbReference>
<dbReference type="RefSeq" id="NP_001004589.1">
    <property type="nucleotide sequence ID" value="NM_001004589.1"/>
</dbReference>
<dbReference type="SMR" id="Q66HY7"/>
<dbReference type="FunCoup" id="Q66HY7">
    <property type="interactions" value="26"/>
</dbReference>
<dbReference type="STRING" id="7955.ENSDARP00000015325"/>
<dbReference type="PaxDb" id="7955-ENSDARP00000015325"/>
<dbReference type="Ensembl" id="ENSDART00000013768">
    <property type="protein sequence ID" value="ENSDARP00000015325"/>
    <property type="gene ID" value="ENSDARG00000005078"/>
</dbReference>
<dbReference type="GeneID" id="447850"/>
<dbReference type="KEGG" id="dre:447850"/>
<dbReference type="AGR" id="ZFIN:ZDB-GENE-040912-156"/>
<dbReference type="CTD" id="317649"/>
<dbReference type="ZFIN" id="ZDB-GENE-040912-156">
    <property type="gene designation" value="eif4e3"/>
</dbReference>
<dbReference type="eggNOG" id="ENOG502QPP4">
    <property type="taxonomic scope" value="Eukaryota"/>
</dbReference>
<dbReference type="HOGENOM" id="CLU_043552_5_1_1"/>
<dbReference type="InParanoid" id="Q66HY7"/>
<dbReference type="OMA" id="HFYKSHQ"/>
<dbReference type="OrthoDB" id="17977at2759"/>
<dbReference type="PhylomeDB" id="Q66HY7"/>
<dbReference type="Reactome" id="R-DRE-1169408">
    <property type="pathway name" value="ISG15 antiviral mechanism"/>
</dbReference>
<dbReference type="PRO" id="PR:Q66HY7"/>
<dbReference type="Proteomes" id="UP000000437">
    <property type="component" value="Chromosome 23"/>
</dbReference>
<dbReference type="Bgee" id="ENSDARG00000005078">
    <property type="expression patterns" value="Expressed in mature ovarian follicle and 28 other cell types or tissues"/>
</dbReference>
<dbReference type="ExpressionAtlas" id="Q66HY7">
    <property type="expression patterns" value="baseline and differential"/>
</dbReference>
<dbReference type="GO" id="GO:0016281">
    <property type="term" value="C:eukaryotic translation initiation factor 4F complex"/>
    <property type="evidence" value="ECO:0000318"/>
    <property type="project" value="GO_Central"/>
</dbReference>
<dbReference type="GO" id="GO:0000340">
    <property type="term" value="F:RNA 7-methylguanosine cap binding"/>
    <property type="evidence" value="ECO:0000318"/>
    <property type="project" value="GO_Central"/>
</dbReference>
<dbReference type="GO" id="GO:0003743">
    <property type="term" value="F:translation initiation factor activity"/>
    <property type="evidence" value="ECO:0000318"/>
    <property type="project" value="GO_Central"/>
</dbReference>
<dbReference type="GO" id="GO:0006417">
    <property type="term" value="P:regulation of translation"/>
    <property type="evidence" value="ECO:0007669"/>
    <property type="project" value="UniProtKB-KW"/>
</dbReference>
<dbReference type="GO" id="GO:0006413">
    <property type="term" value="P:translational initiation"/>
    <property type="evidence" value="ECO:0000318"/>
    <property type="project" value="GO_Central"/>
</dbReference>
<dbReference type="FunFam" id="3.30.760.10:FF:000007">
    <property type="entry name" value="Eukaryotic translation initiation factor 4E family member 3"/>
    <property type="match status" value="1"/>
</dbReference>
<dbReference type="Gene3D" id="3.30.760.10">
    <property type="entry name" value="RNA Cap, Translation Initiation Factor Eif4e"/>
    <property type="match status" value="1"/>
</dbReference>
<dbReference type="InterPro" id="IPR023398">
    <property type="entry name" value="TIF_eIF4e-like"/>
</dbReference>
<dbReference type="InterPro" id="IPR001040">
    <property type="entry name" value="TIF_eIF_4E"/>
</dbReference>
<dbReference type="PANTHER" id="PTHR11960">
    <property type="entry name" value="EUKARYOTIC TRANSLATION INITIATION FACTOR 4E RELATED"/>
    <property type="match status" value="1"/>
</dbReference>
<dbReference type="PANTHER" id="PTHR11960:SF66">
    <property type="entry name" value="EUKARYOTIC TRANSLATION INITIATION FACTOR 4E TYPE 3"/>
    <property type="match status" value="1"/>
</dbReference>
<dbReference type="Pfam" id="PF01652">
    <property type="entry name" value="IF4E"/>
    <property type="match status" value="1"/>
</dbReference>
<dbReference type="SUPFAM" id="SSF55418">
    <property type="entry name" value="eIF4e-like"/>
    <property type="match status" value="1"/>
</dbReference>
<accession>Q66HY7</accession>
<accession>Q4V9B4</accession>
<name>IF4E3_DANRE</name>
<feature type="chain" id="PRO_0000287699" description="Eukaryotic translation initiation factor 4E type 3">
    <location>
        <begin position="1"/>
        <end position="224"/>
    </location>
</feature>
<feature type="region of interest" description="Disordered" evidence="2">
    <location>
        <begin position="1"/>
        <end position="23"/>
    </location>
</feature>
<feature type="compositionally biased region" description="Polar residues" evidence="2">
    <location>
        <begin position="9"/>
        <end position="23"/>
    </location>
</feature>
<feature type="binding site" evidence="1">
    <location>
        <begin position="115"/>
        <end position="116"/>
    </location>
    <ligand>
        <name>mRNA</name>
        <dbReference type="ChEBI" id="CHEBI:33699"/>
    </ligand>
    <ligandPart>
        <name>N(7)-methylguanosine 5'-triphosphate group</name>
        <dbReference type="ChEBI" id="CHEBI:74429"/>
        <note>m7GTP residue in mRNA cap</note>
    </ligandPart>
</feature>
<feature type="binding site" evidence="1">
    <location>
        <begin position="169"/>
        <end position="174"/>
    </location>
    <ligand>
        <name>mRNA</name>
        <dbReference type="ChEBI" id="CHEBI:33699"/>
    </ligand>
    <ligandPart>
        <name>N(7)-methylguanosine 5'-triphosphate group</name>
        <dbReference type="ChEBI" id="CHEBI:74429"/>
        <note>m7GTP residue in mRNA cap</note>
    </ligandPart>
</feature>
<feature type="sequence conflict" description="In Ref. 1; AAH96972." evidence="3" ref="1">
    <original>V</original>
    <variation>E</variation>
    <location>
        <position position="130"/>
    </location>
</feature>
<feature type="sequence conflict" description="In Ref. 1; AAH96972." evidence="3" ref="1">
    <original>G</original>
    <variation>S</variation>
    <location>
        <position position="219"/>
    </location>
</feature>
<comment type="function">
    <text evidence="1">Recognizes and binds the 7-methylguanosine-containing mRNA cap during an early step in the initiation of protein synthesis.</text>
</comment>
<comment type="subunit">
    <text evidence="1">eIF4F is a multi-subunit complex, the composition of which varies with external and internal environmental conditions. It is composed of at least eIF4A, eIF4E and eIF4G (By similarity).</text>
</comment>
<comment type="similarity">
    <text evidence="3">Belongs to the eukaryotic initiation factor 4E family.</text>
</comment>
<gene>
    <name type="primary">eif4e3</name>
    <name type="ORF">zgc:92189</name>
</gene>
<proteinExistence type="evidence at transcript level"/>
<protein>
    <recommendedName>
        <fullName>Eukaryotic translation initiation factor 4E type 3</fullName>
        <shortName>eIF-4E type 3</shortName>
        <shortName>eIF-4E3</shortName>
        <shortName>eIF4E type 3</shortName>
        <shortName>eIF4E-3</shortName>
    </recommendedName>
</protein>
<organism>
    <name type="scientific">Danio rerio</name>
    <name type="common">Zebrafish</name>
    <name type="synonym">Brachydanio rerio</name>
    <dbReference type="NCBI Taxonomy" id="7955"/>
    <lineage>
        <taxon>Eukaryota</taxon>
        <taxon>Metazoa</taxon>
        <taxon>Chordata</taxon>
        <taxon>Craniata</taxon>
        <taxon>Vertebrata</taxon>
        <taxon>Euteleostomi</taxon>
        <taxon>Actinopterygii</taxon>
        <taxon>Neopterygii</taxon>
        <taxon>Teleostei</taxon>
        <taxon>Ostariophysi</taxon>
        <taxon>Cypriniformes</taxon>
        <taxon>Danionidae</taxon>
        <taxon>Danioninae</taxon>
        <taxon>Danio</taxon>
    </lineage>
</organism>
<evidence type="ECO:0000250" key="1"/>
<evidence type="ECO:0000256" key="2">
    <source>
        <dbReference type="SAM" id="MobiDB-lite"/>
    </source>
</evidence>
<evidence type="ECO:0000305" key="3"/>
<keyword id="KW-0396">Initiation factor</keyword>
<keyword id="KW-0648">Protein biosynthesis</keyword>
<keyword id="KW-1185">Reference proteome</keyword>
<keyword id="KW-0694">RNA-binding</keyword>
<keyword id="KW-0810">Translation regulation</keyword>
<reference key="1">
    <citation type="submission" date="2004-09" db="EMBL/GenBank/DDBJ databases">
        <authorList>
            <consortium name="NIH - Zebrafish Gene Collection (ZGC) project"/>
        </authorList>
    </citation>
    <scope>NUCLEOTIDE SEQUENCE [LARGE SCALE MRNA]</scope>
    <source>
        <strain>AB</strain>
    </source>
</reference>